<organism>
    <name type="scientific">Arabidopsis thaliana</name>
    <name type="common">Mouse-ear cress</name>
    <dbReference type="NCBI Taxonomy" id="3702"/>
    <lineage>
        <taxon>Eukaryota</taxon>
        <taxon>Viridiplantae</taxon>
        <taxon>Streptophyta</taxon>
        <taxon>Embryophyta</taxon>
        <taxon>Tracheophyta</taxon>
        <taxon>Spermatophyta</taxon>
        <taxon>Magnoliopsida</taxon>
        <taxon>eudicotyledons</taxon>
        <taxon>Gunneridae</taxon>
        <taxon>Pentapetalae</taxon>
        <taxon>rosids</taxon>
        <taxon>malvids</taxon>
        <taxon>Brassicales</taxon>
        <taxon>Brassicaceae</taxon>
        <taxon>Camelineae</taxon>
        <taxon>Arabidopsis</taxon>
    </lineage>
</organism>
<protein>
    <recommendedName>
        <fullName>Delta-1-pyrroline-5-carboxylate synthase A</fullName>
        <shortName>P5CS A</shortName>
    </recommendedName>
    <domain>
        <recommendedName>
            <fullName>Glutamate 5-kinase</fullName>
            <shortName>GK</shortName>
            <ecNumber>2.7.2.11</ecNumber>
        </recommendedName>
        <alternativeName>
            <fullName>Gamma-glutamyl kinase</fullName>
        </alternativeName>
    </domain>
    <domain>
        <recommendedName>
            <fullName>Gamma-glutamyl phosphate reductase</fullName>
            <shortName>GPR</shortName>
            <ecNumber>1.2.1.41</ecNumber>
        </recommendedName>
        <alternativeName>
            <fullName>Glutamate-5-semialdehyde dehydrogenase</fullName>
        </alternativeName>
        <alternativeName>
            <fullName>Glutamyl-gamma-semialdehyde dehydrogenase</fullName>
        </alternativeName>
    </domain>
</protein>
<evidence type="ECO:0000250" key="1"/>
<evidence type="ECO:0000305" key="2"/>
<evidence type="ECO:0007829" key="3">
    <source>
        <dbReference type="PDB" id="8Y2H"/>
    </source>
</evidence>
<feature type="chain" id="PRO_0000109772" description="Delta-1-pyrroline-5-carboxylate synthase A">
    <location>
        <begin position="1"/>
        <end position="717"/>
    </location>
</feature>
<feature type="region of interest" description="Glutamate 5-kinase">
    <location>
        <begin position="1"/>
        <end position="296"/>
    </location>
</feature>
<feature type="region of interest" description="Gamma-glutamyl phosphate reductase">
    <location>
        <begin position="297"/>
        <end position="717"/>
    </location>
</feature>
<feature type="binding site" evidence="1">
    <location>
        <position position="60"/>
    </location>
    <ligand>
        <name>substrate</name>
    </ligand>
</feature>
<feature type="binding site" evidence="1">
    <location>
        <position position="157"/>
    </location>
    <ligand>
        <name>substrate</name>
    </ligand>
</feature>
<feature type="binding site" evidence="1">
    <location>
        <position position="176"/>
    </location>
    <ligand>
        <name>substrate</name>
    </ligand>
</feature>
<feature type="binding site" evidence="1">
    <location>
        <begin position="196"/>
        <end position="197"/>
    </location>
    <ligand>
        <name>ATP</name>
        <dbReference type="ChEBI" id="CHEBI:30616"/>
    </ligand>
</feature>
<feature type="binding site" evidence="1">
    <location>
        <begin position="236"/>
        <end position="242"/>
    </location>
    <ligand>
        <name>ATP</name>
        <dbReference type="ChEBI" id="CHEBI:30616"/>
    </ligand>
</feature>
<feature type="sequence conflict" description="In Ref. 3; BAA06864." evidence="2" ref="3">
    <original>C</original>
    <variation>F</variation>
    <location>
        <position position="42"/>
    </location>
</feature>
<feature type="sequence conflict" description="In Ref. 3; BAA06864." evidence="2" ref="3">
    <original>E</original>
    <variation>K</variation>
    <location>
        <position position="54"/>
    </location>
</feature>
<feature type="sequence conflict" description="In Ref. 3; BAA06864." evidence="2" ref="3">
    <original>D</original>
    <variation>E</variation>
    <location>
        <position position="381"/>
    </location>
</feature>
<feature type="sequence conflict" description="In Ref. 3; BAA06864." evidence="2" ref="3">
    <original>L</original>
    <variation>F</variation>
    <location>
        <position position="467"/>
    </location>
</feature>
<feature type="sequence conflict" description="In Ref. 3; BAA06864." evidence="2" ref="3">
    <original>H</original>
    <variation>Y</variation>
    <location>
        <position position="676"/>
    </location>
</feature>
<feature type="helix" evidence="3">
    <location>
        <begin position="9"/>
        <end position="12"/>
    </location>
</feature>
<feature type="strand" evidence="3">
    <location>
        <begin position="16"/>
        <end position="21"/>
    </location>
</feature>
<feature type="helix" evidence="3">
    <location>
        <begin position="23"/>
        <end position="26"/>
    </location>
</feature>
<feature type="helix" evidence="3">
    <location>
        <begin position="29"/>
        <end position="31"/>
    </location>
</feature>
<feature type="helix" evidence="3">
    <location>
        <begin position="35"/>
        <end position="51"/>
    </location>
</feature>
<feature type="strand" evidence="3">
    <location>
        <begin position="54"/>
        <end position="58"/>
    </location>
</feature>
<feature type="helix" evidence="3">
    <location>
        <begin position="62"/>
        <end position="77"/>
    </location>
</feature>
<feature type="helix" evidence="3">
    <location>
        <begin position="80"/>
        <end position="84"/>
    </location>
</feature>
<feature type="helix" evidence="3">
    <location>
        <begin position="92"/>
        <end position="113"/>
    </location>
</feature>
<feature type="strand" evidence="3">
    <location>
        <begin position="117"/>
        <end position="120"/>
    </location>
</feature>
<feature type="helix" evidence="3">
    <location>
        <begin position="126"/>
        <end position="129"/>
    </location>
</feature>
<feature type="helix" evidence="3">
    <location>
        <begin position="131"/>
        <end position="145"/>
    </location>
</feature>
<feature type="turn" evidence="3">
    <location>
        <begin position="146"/>
        <end position="148"/>
    </location>
</feature>
<feature type="strand" evidence="3">
    <location>
        <begin position="149"/>
        <end position="153"/>
    </location>
</feature>
<feature type="turn" evidence="3">
    <location>
        <begin position="157"/>
        <end position="159"/>
    </location>
</feature>
<feature type="helix" evidence="3">
    <location>
        <begin position="176"/>
        <end position="186"/>
    </location>
</feature>
<feature type="strand" evidence="3">
    <location>
        <begin position="190"/>
        <end position="200"/>
    </location>
</feature>
<feature type="strand" evidence="3">
    <location>
        <begin position="202"/>
        <end position="204"/>
    </location>
</feature>
<feature type="strand" evidence="3">
    <location>
        <begin position="219"/>
        <end position="221"/>
    </location>
</feature>
<feature type="helix" evidence="3">
    <location>
        <begin position="222"/>
        <end position="225"/>
    </location>
</feature>
<feature type="helix" evidence="3">
    <location>
        <begin position="239"/>
        <end position="251"/>
    </location>
</feature>
<feature type="strand" evidence="3">
    <location>
        <begin position="256"/>
        <end position="260"/>
    </location>
</feature>
<feature type="strand" evidence="3">
    <location>
        <begin position="263"/>
        <end position="265"/>
    </location>
</feature>
<feature type="helix" evidence="3">
    <location>
        <begin position="266"/>
        <end position="272"/>
    </location>
</feature>
<feature type="strand" evidence="3">
    <location>
        <begin position="277"/>
        <end position="280"/>
    </location>
</feature>
<feature type="turn" evidence="3">
    <location>
        <begin position="282"/>
        <end position="284"/>
    </location>
</feature>
<sequence length="717" mass="77702">MEELDRSRAFARDVKRIVVKVGTAVVTGKGGRLALGRLGALCEQLAELNSDGFEVILVSSGAVGLGRQRLRYRQLVNSSFADLQKPQTELDGKACAGVGQSSLMAYYETMFDQLDVTAAQLLVNDSSFRDKDFRKQLNETVKSMLDLRVIPIFNENDAISTRRAPYQDSSGIFWDNDSLAALLALELKADLLILLSDVEGLYTGPPSDPNSKLIHTFVKEKHQDEITFGDKSRLGRGGMTAKVKAAVNAAYAGIPVIITSGYSAENIDKVLRGLRVGTLFHQDARLWAPITDSNARDMAVAARESSRKLQALSSEDRKKILLDIADALEANVTTIKAENELDVASAQEAGLEESMVARLVMTPGKISSLAASVRKLADMEDPIGRVLKKTEVADGLVLEKTSSPLGVLLIVFESRPDALVQIASLAIRSGNGLLLKGGKEARRSNAILHKVITDAIPETVGGKLIGLVTSREEIPDLLKLDDVIDLVIPRGSNKLVTQIKNTTKIPVLGHADGICHVYVDKACDTDMAKRIVSDAKLDYPAACNAMETLLVHKDLEQNAVLNELIFALQSNGVTLYGGPRASKILNIPEARSFNHEYCAKACTVEVVEDVYGAIDHIHRHGSAHTDCIVTEDHEVAELFLRQVDSAAVFHNASTRFSDGFRFGLGAEVGVSTGRIHARGPVGVEGLLTTRWIMRGKGQVVDGDNGIVYTHQDIPIQA</sequence>
<keyword id="KW-0002">3D-structure</keyword>
<keyword id="KW-0025">Alternative splicing</keyword>
<keyword id="KW-0028">Amino-acid biosynthesis</keyword>
<keyword id="KW-0067">ATP-binding</keyword>
<keyword id="KW-0418">Kinase</keyword>
<keyword id="KW-0511">Multifunctional enzyme</keyword>
<keyword id="KW-0521">NADP</keyword>
<keyword id="KW-0547">Nucleotide-binding</keyword>
<keyword id="KW-0560">Oxidoreductase</keyword>
<keyword id="KW-0641">Proline biosynthesis</keyword>
<keyword id="KW-1185">Reference proteome</keyword>
<keyword id="KW-0808">Transferase</keyword>
<proteinExistence type="evidence at protein level"/>
<gene>
    <name type="primary">P5CSA</name>
    <name type="synonym">P5CS1</name>
    <name type="ordered locus">At2g39800</name>
    <name type="ORF">T5I7.10</name>
</gene>
<comment type="function">
    <text>P5CS plays a key role in proline biosynthesis, leading to osmoregulation in plants.</text>
</comment>
<comment type="catalytic activity">
    <reaction>
        <text>L-glutamate + ATP = L-glutamyl 5-phosphate + ADP</text>
        <dbReference type="Rhea" id="RHEA:14877"/>
        <dbReference type="ChEBI" id="CHEBI:29985"/>
        <dbReference type="ChEBI" id="CHEBI:30616"/>
        <dbReference type="ChEBI" id="CHEBI:58274"/>
        <dbReference type="ChEBI" id="CHEBI:456216"/>
        <dbReference type="EC" id="2.7.2.11"/>
    </reaction>
</comment>
<comment type="catalytic activity">
    <reaction>
        <text>L-glutamate 5-semialdehyde + phosphate + NADP(+) = L-glutamyl 5-phosphate + NADPH + H(+)</text>
        <dbReference type="Rhea" id="RHEA:19541"/>
        <dbReference type="ChEBI" id="CHEBI:15378"/>
        <dbReference type="ChEBI" id="CHEBI:43474"/>
        <dbReference type="ChEBI" id="CHEBI:57783"/>
        <dbReference type="ChEBI" id="CHEBI:58066"/>
        <dbReference type="ChEBI" id="CHEBI:58274"/>
        <dbReference type="ChEBI" id="CHEBI:58349"/>
        <dbReference type="EC" id="1.2.1.41"/>
    </reaction>
</comment>
<comment type="pathway">
    <text>Amino-acid biosynthesis; L-proline biosynthesis; L-glutamate 5-semialdehyde from L-glutamate: step 1/2.</text>
</comment>
<comment type="pathway">
    <text>Amino-acid biosynthesis; L-proline biosynthesis; L-glutamate 5-semialdehyde from L-glutamate: step 2/2.</text>
</comment>
<comment type="alternative products">
    <event type="alternative splicing"/>
    <isoform>
        <id>P54887-1</id>
        <name>1</name>
        <sequence type="displayed"/>
    </isoform>
    <text>A number of isoforms are produced. According to EST sequences.</text>
</comment>
<comment type="similarity">
    <text evidence="2">In the N-terminal section; belongs to the glutamate 5-kinase family.</text>
</comment>
<comment type="similarity">
    <text evidence="2">In the C-terminal section; belongs to the gamma-glutamyl phosphate reductase family.</text>
</comment>
<name>P5CS1_ARATH</name>
<reference key="1">
    <citation type="journal article" date="1995" name="FEBS Lett.">
        <title>Isolation, characterization, and chromosomal location of a gene encoding the delta 1-pyrroline-5-carboxylate synthetase in Arabidopsis thaliana.</title>
        <authorList>
            <person name="Savoure A."/>
            <person name="Jaoua S."/>
            <person name="Hua X.J."/>
            <person name="Ardiles W."/>
            <person name="van Montagu M."/>
            <person name="Verbruggen N."/>
        </authorList>
    </citation>
    <scope>NUCLEOTIDE SEQUENCE [GENOMIC DNA / MRNA]</scope>
    <source>
        <strain>cv. Columbia</strain>
    </source>
</reference>
<reference key="2">
    <citation type="journal article" date="1997" name="Plant J.">
        <title>Differential expression of two P5CS genes controlling proline accumulation during salt-stress requires ABA and is regulated by ABA1, ABI1 and AXR2 in Arabidopsis.</title>
        <authorList>
            <person name="Strizhov N."/>
            <person name="Abraham E."/>
            <person name="Oekresz L."/>
            <person name="Blickling S."/>
            <person name="Zilberstein A."/>
            <person name="Schell J."/>
            <person name="Koncz C."/>
            <person name="Szabados L."/>
        </authorList>
    </citation>
    <scope>NUCLEOTIDE SEQUENCE [MRNA]</scope>
    <source>
        <strain>cv. Columbia</strain>
    </source>
</reference>
<reference key="3">
    <citation type="journal article" date="1995" name="Plant J.">
        <title>Correlation between the induction of a gene for delta 1-pyrroline-5-carboxylate synthetase and the accumulation of proline in Arabidopsis thaliana under osmotic stress.</title>
        <authorList>
            <person name="Yoshiba Y."/>
            <person name="Kiyosue T."/>
            <person name="Katagiri T."/>
            <person name="Ueda H."/>
            <person name="Mizoguchi T."/>
            <person name="Yamaguchi-Shinozaki K."/>
            <person name="Wada K."/>
            <person name="Harada Y."/>
            <person name="Shinozaki K."/>
        </authorList>
    </citation>
    <scope>NUCLEOTIDE SEQUENCE [MRNA]</scope>
    <source>
        <strain>cv. Columbia</strain>
    </source>
</reference>
<reference key="4">
    <citation type="journal article" date="1999" name="Nature">
        <title>Sequence and analysis of chromosome 2 of the plant Arabidopsis thaliana.</title>
        <authorList>
            <person name="Lin X."/>
            <person name="Kaul S."/>
            <person name="Rounsley S.D."/>
            <person name="Shea T.P."/>
            <person name="Benito M.-I."/>
            <person name="Town C.D."/>
            <person name="Fujii C.Y."/>
            <person name="Mason T.M."/>
            <person name="Bowman C.L."/>
            <person name="Barnstead M.E."/>
            <person name="Feldblyum T.V."/>
            <person name="Buell C.R."/>
            <person name="Ketchum K.A."/>
            <person name="Lee J.J."/>
            <person name="Ronning C.M."/>
            <person name="Koo H.L."/>
            <person name="Moffat K.S."/>
            <person name="Cronin L.A."/>
            <person name="Shen M."/>
            <person name="Pai G."/>
            <person name="Van Aken S."/>
            <person name="Umayam L."/>
            <person name="Tallon L.J."/>
            <person name="Gill J.E."/>
            <person name="Adams M.D."/>
            <person name="Carrera A.J."/>
            <person name="Creasy T.H."/>
            <person name="Goodman H.M."/>
            <person name="Somerville C.R."/>
            <person name="Copenhaver G.P."/>
            <person name="Preuss D."/>
            <person name="Nierman W.C."/>
            <person name="White O."/>
            <person name="Eisen J.A."/>
            <person name="Salzberg S.L."/>
            <person name="Fraser C.M."/>
            <person name="Venter J.C."/>
        </authorList>
    </citation>
    <scope>NUCLEOTIDE SEQUENCE [LARGE SCALE GENOMIC DNA]</scope>
    <source>
        <strain>cv. Columbia</strain>
    </source>
</reference>
<reference key="5">
    <citation type="journal article" date="2017" name="Plant J.">
        <title>Araport11: a complete reannotation of the Arabidopsis thaliana reference genome.</title>
        <authorList>
            <person name="Cheng C.Y."/>
            <person name="Krishnakumar V."/>
            <person name="Chan A.P."/>
            <person name="Thibaud-Nissen F."/>
            <person name="Schobel S."/>
            <person name="Town C.D."/>
        </authorList>
    </citation>
    <scope>GENOME REANNOTATION</scope>
    <source>
        <strain>cv. Columbia</strain>
    </source>
</reference>
<reference key="6">
    <citation type="journal article" date="2003" name="Science">
        <title>Empirical analysis of transcriptional activity in the Arabidopsis genome.</title>
        <authorList>
            <person name="Yamada K."/>
            <person name="Lim J."/>
            <person name="Dale J.M."/>
            <person name="Chen H."/>
            <person name="Shinn P."/>
            <person name="Palm C.J."/>
            <person name="Southwick A.M."/>
            <person name="Wu H.C."/>
            <person name="Kim C.J."/>
            <person name="Nguyen M."/>
            <person name="Pham P.K."/>
            <person name="Cheuk R.F."/>
            <person name="Karlin-Newmann G."/>
            <person name="Liu S.X."/>
            <person name="Lam B."/>
            <person name="Sakano H."/>
            <person name="Wu T."/>
            <person name="Yu G."/>
            <person name="Miranda M."/>
            <person name="Quach H.L."/>
            <person name="Tripp M."/>
            <person name="Chang C.H."/>
            <person name="Lee J.M."/>
            <person name="Toriumi M.J."/>
            <person name="Chan M.M."/>
            <person name="Tang C.C."/>
            <person name="Onodera C.S."/>
            <person name="Deng J.M."/>
            <person name="Akiyama K."/>
            <person name="Ansari Y."/>
            <person name="Arakawa T."/>
            <person name="Banh J."/>
            <person name="Banno F."/>
            <person name="Bowser L."/>
            <person name="Brooks S.Y."/>
            <person name="Carninci P."/>
            <person name="Chao Q."/>
            <person name="Choy N."/>
            <person name="Enju A."/>
            <person name="Goldsmith A.D."/>
            <person name="Gurjal M."/>
            <person name="Hansen N.F."/>
            <person name="Hayashizaki Y."/>
            <person name="Johnson-Hopson C."/>
            <person name="Hsuan V.W."/>
            <person name="Iida K."/>
            <person name="Karnes M."/>
            <person name="Khan S."/>
            <person name="Koesema E."/>
            <person name="Ishida J."/>
            <person name="Jiang P.X."/>
            <person name="Jones T."/>
            <person name="Kawai J."/>
            <person name="Kamiya A."/>
            <person name="Meyers C."/>
            <person name="Nakajima M."/>
            <person name="Narusaka M."/>
            <person name="Seki M."/>
            <person name="Sakurai T."/>
            <person name="Satou M."/>
            <person name="Tamse R."/>
            <person name="Vaysberg M."/>
            <person name="Wallender E.K."/>
            <person name="Wong C."/>
            <person name="Yamamura Y."/>
            <person name="Yuan S."/>
            <person name="Shinozaki K."/>
            <person name="Davis R.W."/>
            <person name="Theologis A."/>
            <person name="Ecker J.R."/>
        </authorList>
    </citation>
    <scope>NUCLEOTIDE SEQUENCE [LARGE SCALE MRNA]</scope>
    <source>
        <strain>cv. Columbia</strain>
    </source>
</reference>
<reference key="7">
    <citation type="journal article" date="2009" name="Plant Physiol.">
        <title>Large-scale Arabidopsis phosphoproteome profiling reveals novel chloroplast kinase substrates and phosphorylation networks.</title>
        <authorList>
            <person name="Reiland S."/>
            <person name="Messerli G."/>
            <person name="Baerenfaller K."/>
            <person name="Gerrits B."/>
            <person name="Endler A."/>
            <person name="Grossmann J."/>
            <person name="Gruissem W."/>
            <person name="Baginsky S."/>
        </authorList>
    </citation>
    <scope>IDENTIFICATION BY MASS SPECTROMETRY [LARGE SCALE ANALYSIS]</scope>
</reference>
<accession>P54887</accession>
<dbReference type="EC" id="2.7.2.11"/>
<dbReference type="EC" id="1.2.1.41"/>
<dbReference type="EMBL" id="X89414">
    <property type="protein sequence ID" value="CAA61593.1"/>
    <property type="molecule type" value="Genomic_DNA"/>
</dbReference>
<dbReference type="EMBL" id="X86777">
    <property type="protein sequence ID" value="CAA60446.1"/>
    <property type="molecule type" value="mRNA"/>
</dbReference>
<dbReference type="EMBL" id="X87330">
    <property type="protein sequence ID" value="CAA60740.1"/>
    <property type="molecule type" value="mRNA"/>
</dbReference>
<dbReference type="EMBL" id="D32138">
    <property type="protein sequence ID" value="BAA06864.1"/>
    <property type="molecule type" value="mRNA"/>
</dbReference>
<dbReference type="EMBL" id="AC003000">
    <property type="protein sequence ID" value="AAB87129.1"/>
    <property type="molecule type" value="Genomic_DNA"/>
</dbReference>
<dbReference type="EMBL" id="CP002685">
    <property type="protein sequence ID" value="AEC09729.1"/>
    <property type="molecule type" value="Genomic_DNA"/>
</dbReference>
<dbReference type="EMBL" id="CP002685">
    <property type="protein sequence ID" value="AEC09730.1"/>
    <property type="molecule type" value="Genomic_DNA"/>
</dbReference>
<dbReference type="EMBL" id="AF424633">
    <property type="protein sequence ID" value="AAL11626.1"/>
    <property type="molecule type" value="mRNA"/>
</dbReference>
<dbReference type="EMBL" id="AY113046">
    <property type="protein sequence ID" value="AAM47354.1"/>
    <property type="molecule type" value="mRNA"/>
</dbReference>
<dbReference type="EMBL" id="AY150430">
    <property type="protein sequence ID" value="AAN12972.1"/>
    <property type="molecule type" value="mRNA"/>
</dbReference>
<dbReference type="PIR" id="S66637">
    <property type="entry name" value="S66637"/>
</dbReference>
<dbReference type="PIR" id="T50685">
    <property type="entry name" value="T50685"/>
</dbReference>
<dbReference type="RefSeq" id="NP_001189714.1">
    <molecule id="P54887-1"/>
    <property type="nucleotide sequence ID" value="NM_001202785.1"/>
</dbReference>
<dbReference type="RefSeq" id="NP_181510.1">
    <molecule id="P54887-1"/>
    <property type="nucleotide sequence ID" value="NM_129539.2"/>
</dbReference>
<dbReference type="PDB" id="8Y2H">
    <property type="method" value="EM"/>
    <property type="resolution" value="3.30 A"/>
    <property type="chains" value="A/B/C/D/E/F/G/H=1-717"/>
</dbReference>
<dbReference type="PDBsum" id="8Y2H"/>
<dbReference type="EMDB" id="EMD-38855"/>
<dbReference type="SMR" id="P54887"/>
<dbReference type="BioGRID" id="3904">
    <property type="interactions" value="6"/>
</dbReference>
<dbReference type="FunCoup" id="P54887">
    <property type="interactions" value="1851"/>
</dbReference>
<dbReference type="IntAct" id="P54887">
    <property type="interactions" value="6"/>
</dbReference>
<dbReference type="STRING" id="3702.P54887"/>
<dbReference type="iPTMnet" id="P54887"/>
<dbReference type="PaxDb" id="3702-AT2G39800.1"/>
<dbReference type="EnsemblPlants" id="AT2G39800.1">
    <molecule id="P54887-1"/>
    <property type="protein sequence ID" value="AT2G39800.1"/>
    <property type="gene ID" value="AT2G39800"/>
</dbReference>
<dbReference type="EnsemblPlants" id="AT2G39800.4">
    <molecule id="P54887-1"/>
    <property type="protein sequence ID" value="AT2G39800.4"/>
    <property type="gene ID" value="AT2G39800"/>
</dbReference>
<dbReference type="GeneID" id="818566"/>
<dbReference type="Gramene" id="AT2G39800.1">
    <molecule id="P54887-1"/>
    <property type="protein sequence ID" value="AT2G39800.1"/>
    <property type="gene ID" value="AT2G39800"/>
</dbReference>
<dbReference type="Gramene" id="AT2G39800.4">
    <molecule id="P54887-1"/>
    <property type="protein sequence ID" value="AT2G39800.4"/>
    <property type="gene ID" value="AT2G39800"/>
</dbReference>
<dbReference type="KEGG" id="ath:AT2G39800"/>
<dbReference type="Araport" id="AT2G39800"/>
<dbReference type="TAIR" id="AT2G39800">
    <property type="gene designation" value="P5CS1"/>
</dbReference>
<dbReference type="eggNOG" id="KOG1154">
    <property type="taxonomic scope" value="Eukaryota"/>
</dbReference>
<dbReference type="eggNOG" id="KOG4165">
    <property type="taxonomic scope" value="Eukaryota"/>
</dbReference>
<dbReference type="InParanoid" id="P54887"/>
<dbReference type="OrthoDB" id="1934954at2759"/>
<dbReference type="PhylomeDB" id="P54887"/>
<dbReference type="BioCyc" id="ARA:AT2G39800-MONOMER"/>
<dbReference type="BioCyc" id="MetaCyc:AT2G39800-MONOMER"/>
<dbReference type="UniPathway" id="UPA00098">
    <property type="reaction ID" value="UER00359"/>
</dbReference>
<dbReference type="UniPathway" id="UPA00098">
    <property type="reaction ID" value="UER00360"/>
</dbReference>
<dbReference type="PRO" id="PR:P54887"/>
<dbReference type="Proteomes" id="UP000006548">
    <property type="component" value="Chromosome 2"/>
</dbReference>
<dbReference type="ExpressionAtlas" id="P54887">
    <property type="expression patterns" value="baseline and differential"/>
</dbReference>
<dbReference type="GO" id="GO:0009507">
    <property type="term" value="C:chloroplast"/>
    <property type="evidence" value="ECO:0000314"/>
    <property type="project" value="TAIR"/>
</dbReference>
<dbReference type="GO" id="GO:0005737">
    <property type="term" value="C:cytoplasm"/>
    <property type="evidence" value="ECO:0000314"/>
    <property type="project" value="TAIR"/>
</dbReference>
<dbReference type="GO" id="GO:0005794">
    <property type="term" value="C:Golgi apparatus"/>
    <property type="evidence" value="ECO:0007005"/>
    <property type="project" value="TAIR"/>
</dbReference>
<dbReference type="GO" id="GO:0005524">
    <property type="term" value="F:ATP binding"/>
    <property type="evidence" value="ECO:0007669"/>
    <property type="project" value="UniProtKB-KW"/>
</dbReference>
<dbReference type="GO" id="GO:0017084">
    <property type="term" value="F:delta1-pyrroline-5-carboxylate synthetase activity"/>
    <property type="evidence" value="ECO:0000250"/>
    <property type="project" value="TAIR"/>
</dbReference>
<dbReference type="GO" id="GO:0004349">
    <property type="term" value="F:glutamate 5-kinase activity"/>
    <property type="evidence" value="ECO:0007669"/>
    <property type="project" value="UniProtKB-EC"/>
</dbReference>
<dbReference type="GO" id="GO:0004350">
    <property type="term" value="F:glutamate-5-semialdehyde dehydrogenase activity"/>
    <property type="evidence" value="ECO:0007669"/>
    <property type="project" value="UniProtKB-EC"/>
</dbReference>
<dbReference type="GO" id="GO:0042538">
    <property type="term" value="P:hyperosmotic salinity response"/>
    <property type="evidence" value="ECO:0000315"/>
    <property type="project" value="TAIR"/>
</dbReference>
<dbReference type="GO" id="GO:0055129">
    <property type="term" value="P:L-proline biosynthetic process"/>
    <property type="evidence" value="ECO:0007669"/>
    <property type="project" value="UniProtKB-UniPathway"/>
</dbReference>
<dbReference type="GO" id="GO:0009555">
    <property type="term" value="P:pollen development"/>
    <property type="evidence" value="ECO:0000315"/>
    <property type="project" value="TAIR"/>
</dbReference>
<dbReference type="GO" id="GO:0006561">
    <property type="term" value="P:proline biosynthetic process"/>
    <property type="evidence" value="ECO:0000315"/>
    <property type="project" value="TAIR"/>
</dbReference>
<dbReference type="GO" id="GO:0006979">
    <property type="term" value="P:response to oxidative stress"/>
    <property type="evidence" value="ECO:0000315"/>
    <property type="project" value="TAIR"/>
</dbReference>
<dbReference type="GO" id="GO:0009651">
    <property type="term" value="P:response to salt stress"/>
    <property type="evidence" value="ECO:0000270"/>
    <property type="project" value="TAIR"/>
</dbReference>
<dbReference type="GO" id="GO:0009414">
    <property type="term" value="P:response to water deprivation"/>
    <property type="evidence" value="ECO:0000316"/>
    <property type="project" value="TAIR"/>
</dbReference>
<dbReference type="GO" id="GO:0048364">
    <property type="term" value="P:root development"/>
    <property type="evidence" value="ECO:0000315"/>
    <property type="project" value="TAIR"/>
</dbReference>
<dbReference type="CDD" id="cd07079">
    <property type="entry name" value="ALDH_F18-19_ProA-GPR"/>
    <property type="match status" value="1"/>
</dbReference>
<dbReference type="FunFam" id="3.40.1160.10:FF:000013">
    <property type="entry name" value="Delta-1-pyrroline-5-carboxylate synthase"/>
    <property type="match status" value="1"/>
</dbReference>
<dbReference type="FunFam" id="3.40.309.10:FF:000015">
    <property type="entry name" value="Delta-1-pyrroline-5-carboxylate synthase"/>
    <property type="match status" value="1"/>
</dbReference>
<dbReference type="Gene3D" id="3.40.1160.10">
    <property type="entry name" value="Acetylglutamate kinase-like"/>
    <property type="match status" value="1"/>
</dbReference>
<dbReference type="Gene3D" id="3.40.605.10">
    <property type="entry name" value="Aldehyde Dehydrogenase, Chain A, domain 1"/>
    <property type="match status" value="1"/>
</dbReference>
<dbReference type="Gene3D" id="3.40.309.10">
    <property type="entry name" value="Aldehyde Dehydrogenase, Chain A, domain 2"/>
    <property type="match status" value="1"/>
</dbReference>
<dbReference type="HAMAP" id="MF_00412">
    <property type="entry name" value="ProA"/>
    <property type="match status" value="1"/>
</dbReference>
<dbReference type="HAMAP" id="MF_00456">
    <property type="entry name" value="ProB"/>
    <property type="match status" value="1"/>
</dbReference>
<dbReference type="InterPro" id="IPR036393">
    <property type="entry name" value="AceGlu_kinase-like_sf"/>
</dbReference>
<dbReference type="InterPro" id="IPR016161">
    <property type="entry name" value="Ald_DH/histidinol_DH"/>
</dbReference>
<dbReference type="InterPro" id="IPR016163">
    <property type="entry name" value="Ald_DH_C"/>
</dbReference>
<dbReference type="InterPro" id="IPR016162">
    <property type="entry name" value="Ald_DH_N"/>
</dbReference>
<dbReference type="InterPro" id="IPR015590">
    <property type="entry name" value="Aldehyde_DH_dom"/>
</dbReference>
<dbReference type="InterPro" id="IPR001048">
    <property type="entry name" value="Asp/Glu/Uridylate_kinase"/>
</dbReference>
<dbReference type="InterPro" id="IPR020593">
    <property type="entry name" value="G-glutamylP_reductase_CS"/>
</dbReference>
<dbReference type="InterPro" id="IPR001057">
    <property type="entry name" value="Glu/AcGlu_kinase"/>
</dbReference>
<dbReference type="InterPro" id="IPR005715">
    <property type="entry name" value="Glu_5kinase/COase_Synthase"/>
</dbReference>
<dbReference type="InterPro" id="IPR019797">
    <property type="entry name" value="Glutamate_5-kinase_CS"/>
</dbReference>
<dbReference type="InterPro" id="IPR000965">
    <property type="entry name" value="GPR_dom"/>
</dbReference>
<dbReference type="InterPro" id="IPR005766">
    <property type="entry name" value="P5_carboxy_syn"/>
</dbReference>
<dbReference type="NCBIfam" id="TIGR01092">
    <property type="entry name" value="P5CS"/>
    <property type="match status" value="1"/>
</dbReference>
<dbReference type="NCBIfam" id="NF001221">
    <property type="entry name" value="PRK00197.1"/>
    <property type="match status" value="1"/>
</dbReference>
<dbReference type="NCBIfam" id="TIGR00407">
    <property type="entry name" value="proA"/>
    <property type="match status" value="1"/>
</dbReference>
<dbReference type="NCBIfam" id="TIGR01027">
    <property type="entry name" value="proB"/>
    <property type="match status" value="1"/>
</dbReference>
<dbReference type="PANTHER" id="PTHR11063:SF20">
    <property type="entry name" value="DELTA-1-PYRROLINE-5-CARBOXYLATE SYNTHASE A"/>
    <property type="match status" value="1"/>
</dbReference>
<dbReference type="PANTHER" id="PTHR11063">
    <property type="entry name" value="GLUTAMATE SEMIALDEHYDE DEHYDROGENASE"/>
    <property type="match status" value="1"/>
</dbReference>
<dbReference type="Pfam" id="PF00696">
    <property type="entry name" value="AA_kinase"/>
    <property type="match status" value="1"/>
</dbReference>
<dbReference type="Pfam" id="PF00171">
    <property type="entry name" value="Aldedh"/>
    <property type="match status" value="1"/>
</dbReference>
<dbReference type="PIRSF" id="PIRSF036429">
    <property type="entry name" value="P5C_syn"/>
    <property type="match status" value="1"/>
</dbReference>
<dbReference type="PRINTS" id="PR00474">
    <property type="entry name" value="GLU5KINASE"/>
</dbReference>
<dbReference type="SUPFAM" id="SSF53720">
    <property type="entry name" value="ALDH-like"/>
    <property type="match status" value="1"/>
</dbReference>
<dbReference type="SUPFAM" id="SSF53633">
    <property type="entry name" value="Carbamate kinase-like"/>
    <property type="match status" value="1"/>
</dbReference>
<dbReference type="PROSITE" id="PS00902">
    <property type="entry name" value="GLUTAMATE_5_KINASE"/>
    <property type="match status" value="1"/>
</dbReference>
<dbReference type="PROSITE" id="PS01223">
    <property type="entry name" value="PROA"/>
    <property type="match status" value="1"/>
</dbReference>